<feature type="chain" id="PRO_0000249725" description="Lysosomal-associated transmembrane protein 5">
    <location>
        <begin position="1"/>
        <end position="264"/>
    </location>
</feature>
<feature type="transmembrane region" description="Helical" evidence="3">
    <location>
        <begin position="19"/>
        <end position="39"/>
    </location>
</feature>
<feature type="transmembrane region" description="Helical" evidence="3">
    <location>
        <begin position="64"/>
        <end position="84"/>
    </location>
</feature>
<feature type="transmembrane region" description="Helical" evidence="3">
    <location>
        <begin position="92"/>
        <end position="112"/>
    </location>
</feature>
<feature type="transmembrane region" description="Helical" evidence="3">
    <location>
        <begin position="136"/>
        <end position="156"/>
    </location>
</feature>
<feature type="transmembrane region" description="Helical" evidence="3">
    <location>
        <begin position="186"/>
        <end position="206"/>
    </location>
</feature>
<feature type="modified residue" description="Phosphotyrosine" evidence="2">
    <location>
        <position position="261"/>
    </location>
</feature>
<organism>
    <name type="scientific">Bos taurus</name>
    <name type="common">Bovine</name>
    <dbReference type="NCBI Taxonomy" id="9913"/>
    <lineage>
        <taxon>Eukaryota</taxon>
        <taxon>Metazoa</taxon>
        <taxon>Chordata</taxon>
        <taxon>Craniata</taxon>
        <taxon>Vertebrata</taxon>
        <taxon>Euteleostomi</taxon>
        <taxon>Mammalia</taxon>
        <taxon>Eutheria</taxon>
        <taxon>Laurasiatheria</taxon>
        <taxon>Artiodactyla</taxon>
        <taxon>Ruminantia</taxon>
        <taxon>Pecora</taxon>
        <taxon>Bovidae</taxon>
        <taxon>Bovinae</taxon>
        <taxon>Bos</taxon>
    </lineage>
</organism>
<reference key="1">
    <citation type="submission" date="2005-09" db="EMBL/GenBank/DDBJ databases">
        <authorList>
            <consortium name="NIH - Mammalian Gene Collection (MGC) project"/>
        </authorList>
    </citation>
    <scope>NUCLEOTIDE SEQUENCE [LARGE SCALE MRNA]</scope>
    <source>
        <strain>Hereford</strain>
        <tissue>Thymus</tissue>
    </source>
</reference>
<evidence type="ECO:0000250" key="1"/>
<evidence type="ECO:0000250" key="2">
    <source>
        <dbReference type="UniProtKB" id="Q61168"/>
    </source>
</evidence>
<evidence type="ECO:0000255" key="3"/>
<evidence type="ECO:0000305" key="4"/>
<gene>
    <name type="primary">LAPTM5</name>
</gene>
<comment type="function">
    <text evidence="1">May have a special functional role during embryogenesis and in adult hematopoietic cells.</text>
</comment>
<comment type="subunit">
    <text evidence="1">Binds to ubiquitin.</text>
</comment>
<comment type="subcellular location">
    <subcellularLocation>
        <location evidence="1">Lysosome membrane</location>
        <topology evidence="1">Multi-pass membrane protein</topology>
    </subcellularLocation>
</comment>
<comment type="similarity">
    <text evidence="4">Belongs to the LAPTM4/LAPTM5 transporter family.</text>
</comment>
<dbReference type="EMBL" id="BC105438">
    <property type="protein sequence ID" value="AAI05439.1"/>
    <property type="molecule type" value="mRNA"/>
</dbReference>
<dbReference type="RefSeq" id="NP_001039583.1">
    <property type="nucleotide sequence ID" value="NM_001046118.2"/>
</dbReference>
<dbReference type="SMR" id="Q2KJA5"/>
<dbReference type="FunCoup" id="Q2KJA5">
    <property type="interactions" value="693"/>
</dbReference>
<dbReference type="STRING" id="9913.ENSBTAP00000007204"/>
<dbReference type="PaxDb" id="9913-ENSBTAP00000055255"/>
<dbReference type="GeneID" id="512361"/>
<dbReference type="KEGG" id="bta:512361"/>
<dbReference type="CTD" id="7805"/>
<dbReference type="VEuPathDB" id="HostDB:ENSBTAG00000005477"/>
<dbReference type="eggNOG" id="ENOG502RY9P">
    <property type="taxonomic scope" value="Eukaryota"/>
</dbReference>
<dbReference type="HOGENOM" id="CLU_1065422_0_0_1"/>
<dbReference type="InParanoid" id="Q2KJA5"/>
<dbReference type="OMA" id="QICCCFN"/>
<dbReference type="OrthoDB" id="8733516at2759"/>
<dbReference type="Proteomes" id="UP000009136">
    <property type="component" value="Chromosome 2"/>
</dbReference>
<dbReference type="Bgee" id="ENSBTAG00000005477">
    <property type="expression patterns" value="Expressed in monocyte and 103 other cell types or tissues"/>
</dbReference>
<dbReference type="GO" id="GO:0005765">
    <property type="term" value="C:lysosomal membrane"/>
    <property type="evidence" value="ECO:0000318"/>
    <property type="project" value="GO_Central"/>
</dbReference>
<dbReference type="InterPro" id="IPR004687">
    <property type="entry name" value="LAPTM4/5"/>
</dbReference>
<dbReference type="InterPro" id="IPR018396">
    <property type="entry name" value="LAPTM_4A/5"/>
</dbReference>
<dbReference type="InterPro" id="IPR051115">
    <property type="entry name" value="LAPTM_transporter"/>
</dbReference>
<dbReference type="NCBIfam" id="TIGR00799">
    <property type="entry name" value="mtp"/>
    <property type="match status" value="1"/>
</dbReference>
<dbReference type="PANTHER" id="PTHR12479">
    <property type="entry name" value="LYSOSOMAL-ASSOCIATED TRANSMEMBRANE PROTEIN"/>
    <property type="match status" value="1"/>
</dbReference>
<dbReference type="PANTHER" id="PTHR12479:SF2">
    <property type="entry name" value="LYSOSOMAL-ASSOCIATED TRANSMEMBRANE PROTEIN 5"/>
    <property type="match status" value="1"/>
</dbReference>
<dbReference type="Pfam" id="PF03821">
    <property type="entry name" value="Mtp"/>
    <property type="match status" value="1"/>
</dbReference>
<keyword id="KW-0458">Lysosome</keyword>
<keyword id="KW-0472">Membrane</keyword>
<keyword id="KW-0597">Phosphoprotein</keyword>
<keyword id="KW-1185">Reference proteome</keyword>
<keyword id="KW-0812">Transmembrane</keyword>
<keyword id="KW-1133">Transmembrane helix</keyword>
<keyword id="KW-0813">Transport</keyword>
<name>LAPM5_BOVIN</name>
<accession>Q2KJA5</accession>
<proteinExistence type="evidence at transcript level"/>
<protein>
    <recommendedName>
        <fullName>Lysosomal-associated transmembrane protein 5</fullName>
    </recommendedName>
    <alternativeName>
        <fullName>Lysosomal-associated multitransmembrane protein 5</fullName>
    </alternativeName>
</protein>
<sequence>MAPRAAAIRQTCCCFNVRIATTALAIYHVIMSVLLFIEHSVEVAHGKASCKFSKTGYLRIAELVSSFLLITMLFIISLSLLVGVVKNREKYLLPFLSLQIMDFLLCLLTLMGSYIELPAYLKFASRSSRRVSPSKVPLMTLQLLDFCLSILTLCSSYMEVPTYLNFKSMNHMNYLPSQDGMTHNQFIKIMIIFSIAFITVLILKVYMFKCVWRCYRLMKCTNSAEERSGSKMLQKVVLPSYEEAVSLPYKVPEGGPAPPPYSEV</sequence>